<gene>
    <name evidence="1" type="primary">ADK1</name>
    <name type="ordered locus">AGR187W</name>
</gene>
<dbReference type="EC" id="2.7.4.3" evidence="1"/>
<dbReference type="EMBL" id="AE016820">
    <property type="protein sequence ID" value="AAS54677.1"/>
    <property type="molecule type" value="Genomic_DNA"/>
</dbReference>
<dbReference type="RefSeq" id="NP_986853.1">
    <property type="nucleotide sequence ID" value="NM_211915.1"/>
</dbReference>
<dbReference type="SMR" id="Q74ZL1"/>
<dbReference type="FunCoup" id="Q74ZL1">
    <property type="interactions" value="839"/>
</dbReference>
<dbReference type="STRING" id="284811.Q74ZL1"/>
<dbReference type="EnsemblFungi" id="AAS54677">
    <property type="protein sequence ID" value="AAS54677"/>
    <property type="gene ID" value="AGOS_AGR187W"/>
</dbReference>
<dbReference type="GeneID" id="4623155"/>
<dbReference type="KEGG" id="ago:AGOS_AGR187W"/>
<dbReference type="eggNOG" id="KOG3078">
    <property type="taxonomic scope" value="Eukaryota"/>
</dbReference>
<dbReference type="HOGENOM" id="CLU_032354_1_0_1"/>
<dbReference type="InParanoid" id="Q74ZL1"/>
<dbReference type="OMA" id="VYHEQTA"/>
<dbReference type="OrthoDB" id="439792at2759"/>
<dbReference type="Proteomes" id="UP000000591">
    <property type="component" value="Chromosome VII"/>
</dbReference>
<dbReference type="GO" id="GO:0005737">
    <property type="term" value="C:cytoplasm"/>
    <property type="evidence" value="ECO:0000318"/>
    <property type="project" value="GO_Central"/>
</dbReference>
<dbReference type="GO" id="GO:0005829">
    <property type="term" value="C:cytosol"/>
    <property type="evidence" value="ECO:0007669"/>
    <property type="project" value="UniProtKB-SubCell"/>
</dbReference>
<dbReference type="GO" id="GO:0005758">
    <property type="term" value="C:mitochondrial intermembrane space"/>
    <property type="evidence" value="ECO:0007669"/>
    <property type="project" value="UniProtKB-SubCell"/>
</dbReference>
<dbReference type="GO" id="GO:0005739">
    <property type="term" value="C:mitochondrion"/>
    <property type="evidence" value="ECO:0000318"/>
    <property type="project" value="GO_Central"/>
</dbReference>
<dbReference type="GO" id="GO:0004017">
    <property type="term" value="F:adenylate kinase activity"/>
    <property type="evidence" value="ECO:0000318"/>
    <property type="project" value="GO_Central"/>
</dbReference>
<dbReference type="GO" id="GO:0016208">
    <property type="term" value="F:AMP binding"/>
    <property type="evidence" value="ECO:0007669"/>
    <property type="project" value="EnsemblFungi"/>
</dbReference>
<dbReference type="GO" id="GO:0005524">
    <property type="term" value="F:ATP binding"/>
    <property type="evidence" value="ECO:0007669"/>
    <property type="project" value="UniProtKB-KW"/>
</dbReference>
<dbReference type="GO" id="GO:0003688">
    <property type="term" value="F:DNA replication origin binding"/>
    <property type="evidence" value="ECO:0007669"/>
    <property type="project" value="EnsemblFungi"/>
</dbReference>
<dbReference type="GO" id="GO:0006172">
    <property type="term" value="P:ADP biosynthetic process"/>
    <property type="evidence" value="ECO:0000318"/>
    <property type="project" value="GO_Central"/>
</dbReference>
<dbReference type="GO" id="GO:0046033">
    <property type="term" value="P:AMP metabolic process"/>
    <property type="evidence" value="ECO:0007669"/>
    <property type="project" value="UniProtKB-UniRule"/>
</dbReference>
<dbReference type="GO" id="GO:0046034">
    <property type="term" value="P:ATP metabolic process"/>
    <property type="evidence" value="ECO:0007669"/>
    <property type="project" value="UniProtKB-UniRule"/>
</dbReference>
<dbReference type="GO" id="GO:0006270">
    <property type="term" value="P:DNA replication initiation"/>
    <property type="evidence" value="ECO:0007669"/>
    <property type="project" value="EnsemblFungi"/>
</dbReference>
<dbReference type="GO" id="GO:0036388">
    <property type="term" value="P:pre-replicative complex assembly"/>
    <property type="evidence" value="ECO:0007669"/>
    <property type="project" value="EnsemblFungi"/>
</dbReference>
<dbReference type="CDD" id="cd01428">
    <property type="entry name" value="ADK"/>
    <property type="match status" value="1"/>
</dbReference>
<dbReference type="FunFam" id="3.40.50.300:FF:000106">
    <property type="entry name" value="Adenylate kinase mitochondrial"/>
    <property type="match status" value="1"/>
</dbReference>
<dbReference type="Gene3D" id="3.40.50.300">
    <property type="entry name" value="P-loop containing nucleotide triphosphate hydrolases"/>
    <property type="match status" value="1"/>
</dbReference>
<dbReference type="HAMAP" id="MF_00235">
    <property type="entry name" value="Adenylate_kinase_Adk"/>
    <property type="match status" value="1"/>
</dbReference>
<dbReference type="HAMAP" id="MF_03168">
    <property type="entry name" value="Adenylate_kinase_AK2"/>
    <property type="match status" value="1"/>
</dbReference>
<dbReference type="InterPro" id="IPR006259">
    <property type="entry name" value="Adenyl_kin_sub"/>
</dbReference>
<dbReference type="InterPro" id="IPR000850">
    <property type="entry name" value="Adenylat/UMP-CMP_kin"/>
</dbReference>
<dbReference type="InterPro" id="IPR033690">
    <property type="entry name" value="Adenylat_kinase_CS"/>
</dbReference>
<dbReference type="InterPro" id="IPR007862">
    <property type="entry name" value="Adenylate_kinase_lid-dom"/>
</dbReference>
<dbReference type="InterPro" id="IPR036193">
    <property type="entry name" value="ADK_active_lid_dom_sf"/>
</dbReference>
<dbReference type="InterPro" id="IPR028587">
    <property type="entry name" value="AK2"/>
</dbReference>
<dbReference type="InterPro" id="IPR027417">
    <property type="entry name" value="P-loop_NTPase"/>
</dbReference>
<dbReference type="NCBIfam" id="TIGR01351">
    <property type="entry name" value="adk"/>
    <property type="match status" value="1"/>
</dbReference>
<dbReference type="NCBIfam" id="NF001380">
    <property type="entry name" value="PRK00279.1-2"/>
    <property type="match status" value="1"/>
</dbReference>
<dbReference type="NCBIfam" id="NF001381">
    <property type="entry name" value="PRK00279.1-3"/>
    <property type="match status" value="1"/>
</dbReference>
<dbReference type="NCBIfam" id="NF011100">
    <property type="entry name" value="PRK14527.1"/>
    <property type="match status" value="1"/>
</dbReference>
<dbReference type="PANTHER" id="PTHR23359">
    <property type="entry name" value="NUCLEOTIDE KINASE"/>
    <property type="match status" value="1"/>
</dbReference>
<dbReference type="Pfam" id="PF00406">
    <property type="entry name" value="ADK"/>
    <property type="match status" value="1"/>
</dbReference>
<dbReference type="Pfam" id="PF05191">
    <property type="entry name" value="ADK_lid"/>
    <property type="match status" value="1"/>
</dbReference>
<dbReference type="PRINTS" id="PR00094">
    <property type="entry name" value="ADENYLTKNASE"/>
</dbReference>
<dbReference type="SUPFAM" id="SSF57774">
    <property type="entry name" value="Microbial and mitochondrial ADK, insert 'zinc finger' domain"/>
    <property type="match status" value="1"/>
</dbReference>
<dbReference type="SUPFAM" id="SSF52540">
    <property type="entry name" value="P-loop containing nucleoside triphosphate hydrolases"/>
    <property type="match status" value="1"/>
</dbReference>
<dbReference type="PROSITE" id="PS00113">
    <property type="entry name" value="ADENYLATE_KINASE"/>
    <property type="match status" value="1"/>
</dbReference>
<comment type="function">
    <text evidence="1">Catalyzes the reversible transfer of the terminal phosphate group between ATP and AMP. Plays an important role in cellular energy homeostasis and in adenine nucleotide metabolism. Adenylate kinase activity is critical for regulation of the phosphate utilization and the AMP de novo biosynthesis pathways.</text>
</comment>
<comment type="catalytic activity">
    <reaction evidence="1">
        <text>AMP + ATP = 2 ADP</text>
        <dbReference type="Rhea" id="RHEA:12973"/>
        <dbReference type="ChEBI" id="CHEBI:30616"/>
        <dbReference type="ChEBI" id="CHEBI:456215"/>
        <dbReference type="ChEBI" id="CHEBI:456216"/>
        <dbReference type="EC" id="2.7.4.3"/>
    </reaction>
</comment>
<comment type="subunit">
    <text evidence="1">Monomer.</text>
</comment>
<comment type="subcellular location">
    <subcellularLocation>
        <location evidence="1">Cytoplasm</location>
        <location evidence="1">Cytosol</location>
    </subcellularLocation>
    <subcellularLocation>
        <location evidence="1">Mitochondrion intermembrane space</location>
    </subcellularLocation>
    <text evidence="1">Predominantly mitochondrial.</text>
</comment>
<comment type="domain">
    <text evidence="1">Consists of three domains, a large central CORE domain and two small peripheral domains, NMPbind and LID, which undergo movements during catalysis. The LID domain closes over the site of phosphoryl transfer upon ATP binding. Assembling and dissambling the active center during each catalytic cycle provides an effective means to prevent ATP hydrolysis.</text>
</comment>
<comment type="similarity">
    <text evidence="1">Belongs to the adenylate kinase family. AK2 subfamily.</text>
</comment>
<sequence>MSCWTYLGRARGPRASAPTARRFFANFFNDLIVAVSSTVGALKTSQQTPLKMSQDMSHVPEAIRMVLIGPPGAGKGTQAPKLKEKFCVCHLATGDMLRSQVAKQTALGVQAKKIMDQGGLVSDEIMVNMIKDELRSNPECANGFILDGFPRTIPQAQKLDEMLVAQGKPLDRAVELKIDDELLVARITGRLVHPASGRSYHKLFNPPKVAMTDDVTGDPLVQRSDDNADALKKRLDAYHAQTEPIVDFYKKTGIWAGVDASQPPKTVWSDILKALGK</sequence>
<feature type="chain" id="PRO_0000365658" description="Adenylate kinase">
    <location>
        <begin position="1"/>
        <end position="277"/>
    </location>
</feature>
<feature type="region of interest" description="NMP" evidence="1">
    <location>
        <begin position="92"/>
        <end position="121"/>
    </location>
</feature>
<feature type="region of interest" description="LID" evidence="1">
    <location>
        <begin position="189"/>
        <end position="226"/>
    </location>
</feature>
<feature type="binding site" evidence="1">
    <location>
        <begin position="72"/>
        <end position="77"/>
    </location>
    <ligand>
        <name>ATP</name>
        <dbReference type="ChEBI" id="CHEBI:30616"/>
    </ligand>
</feature>
<feature type="binding site" evidence="1">
    <location>
        <position position="93"/>
    </location>
    <ligand>
        <name>AMP</name>
        <dbReference type="ChEBI" id="CHEBI:456215"/>
    </ligand>
</feature>
<feature type="binding site" evidence="1">
    <location>
        <position position="98"/>
    </location>
    <ligand>
        <name>AMP</name>
        <dbReference type="ChEBI" id="CHEBI:456215"/>
    </ligand>
</feature>
<feature type="binding site" evidence="1">
    <location>
        <begin position="119"/>
        <end position="121"/>
    </location>
    <ligand>
        <name>AMP</name>
        <dbReference type="ChEBI" id="CHEBI:456215"/>
    </ligand>
</feature>
<feature type="binding site" evidence="1">
    <location>
        <begin position="148"/>
        <end position="151"/>
    </location>
    <ligand>
        <name>AMP</name>
        <dbReference type="ChEBI" id="CHEBI:456215"/>
    </ligand>
</feature>
<feature type="binding site" evidence="1">
    <location>
        <position position="155"/>
    </location>
    <ligand>
        <name>AMP</name>
        <dbReference type="ChEBI" id="CHEBI:456215"/>
    </ligand>
</feature>
<feature type="binding site" evidence="1">
    <location>
        <position position="190"/>
    </location>
    <ligand>
        <name>ATP</name>
        <dbReference type="ChEBI" id="CHEBI:30616"/>
    </ligand>
</feature>
<feature type="binding site" evidence="1">
    <location>
        <begin position="199"/>
        <end position="200"/>
    </location>
    <ligand>
        <name>ATP</name>
        <dbReference type="ChEBI" id="CHEBI:30616"/>
    </ligand>
</feature>
<feature type="binding site" evidence="1">
    <location>
        <position position="223"/>
    </location>
    <ligand>
        <name>AMP</name>
        <dbReference type="ChEBI" id="CHEBI:456215"/>
    </ligand>
</feature>
<feature type="binding site" evidence="1">
    <location>
        <position position="234"/>
    </location>
    <ligand>
        <name>AMP</name>
        <dbReference type="ChEBI" id="CHEBI:456215"/>
    </ligand>
</feature>
<feature type="binding site" evidence="1">
    <location>
        <position position="262"/>
    </location>
    <ligand>
        <name>ATP</name>
        <dbReference type="ChEBI" id="CHEBI:30616"/>
    </ligand>
</feature>
<organism>
    <name type="scientific">Eremothecium gossypii (strain ATCC 10895 / CBS 109.51 / FGSC 9923 / NRRL Y-1056)</name>
    <name type="common">Yeast</name>
    <name type="synonym">Ashbya gossypii</name>
    <dbReference type="NCBI Taxonomy" id="284811"/>
    <lineage>
        <taxon>Eukaryota</taxon>
        <taxon>Fungi</taxon>
        <taxon>Dikarya</taxon>
        <taxon>Ascomycota</taxon>
        <taxon>Saccharomycotina</taxon>
        <taxon>Saccharomycetes</taxon>
        <taxon>Saccharomycetales</taxon>
        <taxon>Saccharomycetaceae</taxon>
        <taxon>Eremothecium</taxon>
    </lineage>
</organism>
<name>KAD2_EREGS</name>
<proteinExistence type="inferred from homology"/>
<accession>Q74ZL1</accession>
<keyword id="KW-0067">ATP-binding</keyword>
<keyword id="KW-0963">Cytoplasm</keyword>
<keyword id="KW-0418">Kinase</keyword>
<keyword id="KW-0496">Mitochondrion</keyword>
<keyword id="KW-0547">Nucleotide-binding</keyword>
<keyword id="KW-1185">Reference proteome</keyword>
<keyword id="KW-0808">Transferase</keyword>
<evidence type="ECO:0000255" key="1">
    <source>
        <dbReference type="HAMAP-Rule" id="MF_03168"/>
    </source>
</evidence>
<reference key="1">
    <citation type="journal article" date="2004" name="Science">
        <title>The Ashbya gossypii genome as a tool for mapping the ancient Saccharomyces cerevisiae genome.</title>
        <authorList>
            <person name="Dietrich F.S."/>
            <person name="Voegeli S."/>
            <person name="Brachat S."/>
            <person name="Lerch A."/>
            <person name="Gates K."/>
            <person name="Steiner S."/>
            <person name="Mohr C."/>
            <person name="Poehlmann R."/>
            <person name="Luedi P."/>
            <person name="Choi S."/>
            <person name="Wing R.A."/>
            <person name="Flavier A."/>
            <person name="Gaffney T.D."/>
            <person name="Philippsen P."/>
        </authorList>
    </citation>
    <scope>NUCLEOTIDE SEQUENCE [LARGE SCALE GENOMIC DNA]</scope>
    <source>
        <strain>ATCC 10895 / CBS 109.51 / FGSC 9923 / NRRL Y-1056</strain>
    </source>
</reference>
<reference key="2">
    <citation type="journal article" date="2013" name="G3 (Bethesda)">
        <title>Genomes of Ashbya fungi isolated from insects reveal four mating-type loci, numerous translocations, lack of transposons, and distinct gene duplications.</title>
        <authorList>
            <person name="Dietrich F.S."/>
            <person name="Voegeli S."/>
            <person name="Kuo S."/>
            <person name="Philippsen P."/>
        </authorList>
    </citation>
    <scope>GENOME REANNOTATION</scope>
    <source>
        <strain>ATCC 10895 / CBS 109.51 / FGSC 9923 / NRRL Y-1056</strain>
    </source>
</reference>
<protein>
    <recommendedName>
        <fullName evidence="1">Adenylate kinase</fullName>
        <ecNumber evidence="1">2.7.4.3</ecNumber>
    </recommendedName>
    <alternativeName>
        <fullName evidence="1">ATP-AMP transphosphorylase</fullName>
    </alternativeName>
    <alternativeName>
        <fullName evidence="1">ATP:AMP phosphotransferase</fullName>
    </alternativeName>
    <alternativeName>
        <fullName evidence="1">Adenylate kinase cytosolic and mitochondrial</fullName>
    </alternativeName>
    <alternativeName>
        <fullName evidence="1">Adenylate monophosphate kinase</fullName>
    </alternativeName>
</protein>